<accession>Q1L9A2</accession>
<dbReference type="EMBL" id="CR377223">
    <property type="protein sequence ID" value="CAK05152.1"/>
    <property type="molecule type" value="Genomic_DNA"/>
</dbReference>
<dbReference type="RefSeq" id="NP_001073635.1">
    <property type="nucleotide sequence ID" value="NM_001080166.1"/>
</dbReference>
<dbReference type="SMR" id="Q1L9A2"/>
<dbReference type="FunCoup" id="Q1L9A2">
    <property type="interactions" value="446"/>
</dbReference>
<dbReference type="STRING" id="7955.ENSDARP00000082921"/>
<dbReference type="PaxDb" id="7955-ENSDARP00000082921"/>
<dbReference type="Ensembl" id="ENSDART00000088488">
    <property type="protein sequence ID" value="ENSDARP00000082921"/>
    <property type="gene ID" value="ENSDARG00000061761"/>
</dbReference>
<dbReference type="GeneID" id="497278"/>
<dbReference type="KEGG" id="dre:497278"/>
<dbReference type="AGR" id="ZFIN:ZDB-GENE-050210-1"/>
<dbReference type="CTD" id="80207"/>
<dbReference type="ZFIN" id="ZDB-GENE-050210-1">
    <property type="gene designation" value="opa3"/>
</dbReference>
<dbReference type="eggNOG" id="KOG3335">
    <property type="taxonomic scope" value="Eukaryota"/>
</dbReference>
<dbReference type="HOGENOM" id="CLU_074707_5_1_1"/>
<dbReference type="InParanoid" id="Q1L9A2"/>
<dbReference type="OMA" id="KMYVMNL"/>
<dbReference type="OrthoDB" id="2129069at2759"/>
<dbReference type="PhylomeDB" id="Q1L9A2"/>
<dbReference type="TreeFam" id="TF314653"/>
<dbReference type="PRO" id="PR:Q1L9A2"/>
<dbReference type="Proteomes" id="UP000000437">
    <property type="component" value="Chromosome 18"/>
</dbReference>
<dbReference type="Bgee" id="ENSDARG00000061761">
    <property type="expression patterns" value="Expressed in cleaving embryo and 36 other cell types or tissues"/>
</dbReference>
<dbReference type="GO" id="GO:0005739">
    <property type="term" value="C:mitochondrion"/>
    <property type="evidence" value="ECO:0000314"/>
    <property type="project" value="ZFIN"/>
</dbReference>
<dbReference type="GO" id="GO:0007626">
    <property type="term" value="P:locomotory behavior"/>
    <property type="evidence" value="ECO:0000315"/>
    <property type="project" value="ZFIN"/>
</dbReference>
<dbReference type="GO" id="GO:0050881">
    <property type="term" value="P:musculoskeletal movement"/>
    <property type="evidence" value="ECO:0000315"/>
    <property type="project" value="ZFIN"/>
</dbReference>
<dbReference type="GO" id="GO:0031413">
    <property type="term" value="P:regulation of buoyancy"/>
    <property type="evidence" value="ECO:0000315"/>
    <property type="project" value="ZFIN"/>
</dbReference>
<dbReference type="GO" id="GO:0019216">
    <property type="term" value="P:regulation of lipid metabolic process"/>
    <property type="evidence" value="ECO:0000318"/>
    <property type="project" value="GO_Central"/>
</dbReference>
<dbReference type="InterPro" id="IPR010754">
    <property type="entry name" value="OPA3-like"/>
</dbReference>
<dbReference type="PANTHER" id="PTHR12499:SF0">
    <property type="entry name" value="OPTIC ATROPHY 3 PROTEIN"/>
    <property type="match status" value="1"/>
</dbReference>
<dbReference type="PANTHER" id="PTHR12499">
    <property type="entry name" value="OPTIC ATROPHY 3 PROTEIN OPA3"/>
    <property type="match status" value="1"/>
</dbReference>
<dbReference type="Pfam" id="PF07047">
    <property type="entry name" value="OPA3"/>
    <property type="match status" value="1"/>
</dbReference>
<feature type="chain" id="PRO_0000326548" description="Optic atrophy 3 protein homolog">
    <location>
        <begin position="1"/>
        <end position="157"/>
    </location>
</feature>
<feature type="coiled-coil region" evidence="2">
    <location>
        <begin position="103"/>
        <end position="129"/>
    </location>
</feature>
<gene>
    <name type="primary">opa3</name>
    <name type="ORF">si:dkey-12o15.3</name>
</gene>
<sequence length="157" mass="17306">MVVGAFPIAKLLYLGVRQLSKPVANRIKAGARRSEFFKNYICLPPAQAYHWIEMRTKMRIMGFRGSTIKPLNEDAAAELGAELLGEAIIFVIGGGCMVLEYSRQAANSRRKEEELAQSITSLQTQLGELALTTETLDAQIREVNRLLLSLPAAPSSK</sequence>
<evidence type="ECO:0000250" key="1"/>
<evidence type="ECO:0000255" key="2"/>
<evidence type="ECO:0000305" key="3"/>
<comment type="function">
    <text evidence="1">May play some role in mitochondrial processes.</text>
</comment>
<comment type="subcellular location">
    <subcellularLocation>
        <location evidence="1">Mitochondrion</location>
    </subcellularLocation>
</comment>
<comment type="similarity">
    <text evidence="3">Belongs to the OPA3 family.</text>
</comment>
<protein>
    <recommendedName>
        <fullName>Optic atrophy 3 protein homolog</fullName>
    </recommendedName>
</protein>
<keyword id="KW-0175">Coiled coil</keyword>
<keyword id="KW-0496">Mitochondrion</keyword>
<keyword id="KW-1185">Reference proteome</keyword>
<name>OPA3_DANRE</name>
<reference key="1">
    <citation type="journal article" date="2013" name="Nature">
        <title>The zebrafish reference genome sequence and its relationship to the human genome.</title>
        <authorList>
            <person name="Howe K."/>
            <person name="Clark M.D."/>
            <person name="Torroja C.F."/>
            <person name="Torrance J."/>
            <person name="Berthelot C."/>
            <person name="Muffato M."/>
            <person name="Collins J.E."/>
            <person name="Humphray S."/>
            <person name="McLaren K."/>
            <person name="Matthews L."/>
            <person name="McLaren S."/>
            <person name="Sealy I."/>
            <person name="Caccamo M."/>
            <person name="Churcher C."/>
            <person name="Scott C."/>
            <person name="Barrett J.C."/>
            <person name="Koch R."/>
            <person name="Rauch G.J."/>
            <person name="White S."/>
            <person name="Chow W."/>
            <person name="Kilian B."/>
            <person name="Quintais L.T."/>
            <person name="Guerra-Assuncao J.A."/>
            <person name="Zhou Y."/>
            <person name="Gu Y."/>
            <person name="Yen J."/>
            <person name="Vogel J.H."/>
            <person name="Eyre T."/>
            <person name="Redmond S."/>
            <person name="Banerjee R."/>
            <person name="Chi J."/>
            <person name="Fu B."/>
            <person name="Langley E."/>
            <person name="Maguire S.F."/>
            <person name="Laird G.K."/>
            <person name="Lloyd D."/>
            <person name="Kenyon E."/>
            <person name="Donaldson S."/>
            <person name="Sehra H."/>
            <person name="Almeida-King J."/>
            <person name="Loveland J."/>
            <person name="Trevanion S."/>
            <person name="Jones M."/>
            <person name="Quail M."/>
            <person name="Willey D."/>
            <person name="Hunt A."/>
            <person name="Burton J."/>
            <person name="Sims S."/>
            <person name="McLay K."/>
            <person name="Plumb B."/>
            <person name="Davis J."/>
            <person name="Clee C."/>
            <person name="Oliver K."/>
            <person name="Clark R."/>
            <person name="Riddle C."/>
            <person name="Elliot D."/>
            <person name="Threadgold G."/>
            <person name="Harden G."/>
            <person name="Ware D."/>
            <person name="Begum S."/>
            <person name="Mortimore B."/>
            <person name="Kerry G."/>
            <person name="Heath P."/>
            <person name="Phillimore B."/>
            <person name="Tracey A."/>
            <person name="Corby N."/>
            <person name="Dunn M."/>
            <person name="Johnson C."/>
            <person name="Wood J."/>
            <person name="Clark S."/>
            <person name="Pelan S."/>
            <person name="Griffiths G."/>
            <person name="Smith M."/>
            <person name="Glithero R."/>
            <person name="Howden P."/>
            <person name="Barker N."/>
            <person name="Lloyd C."/>
            <person name="Stevens C."/>
            <person name="Harley J."/>
            <person name="Holt K."/>
            <person name="Panagiotidis G."/>
            <person name="Lovell J."/>
            <person name="Beasley H."/>
            <person name="Henderson C."/>
            <person name="Gordon D."/>
            <person name="Auger K."/>
            <person name="Wright D."/>
            <person name="Collins J."/>
            <person name="Raisen C."/>
            <person name="Dyer L."/>
            <person name="Leung K."/>
            <person name="Robertson L."/>
            <person name="Ambridge K."/>
            <person name="Leongamornlert D."/>
            <person name="McGuire S."/>
            <person name="Gilderthorp R."/>
            <person name="Griffiths C."/>
            <person name="Manthravadi D."/>
            <person name="Nichol S."/>
            <person name="Barker G."/>
            <person name="Whitehead S."/>
            <person name="Kay M."/>
            <person name="Brown J."/>
            <person name="Murnane C."/>
            <person name="Gray E."/>
            <person name="Humphries M."/>
            <person name="Sycamore N."/>
            <person name="Barker D."/>
            <person name="Saunders D."/>
            <person name="Wallis J."/>
            <person name="Babbage A."/>
            <person name="Hammond S."/>
            <person name="Mashreghi-Mohammadi M."/>
            <person name="Barr L."/>
            <person name="Martin S."/>
            <person name="Wray P."/>
            <person name="Ellington A."/>
            <person name="Matthews N."/>
            <person name="Ellwood M."/>
            <person name="Woodmansey R."/>
            <person name="Clark G."/>
            <person name="Cooper J."/>
            <person name="Tromans A."/>
            <person name="Grafham D."/>
            <person name="Skuce C."/>
            <person name="Pandian R."/>
            <person name="Andrews R."/>
            <person name="Harrison E."/>
            <person name="Kimberley A."/>
            <person name="Garnett J."/>
            <person name="Fosker N."/>
            <person name="Hall R."/>
            <person name="Garner P."/>
            <person name="Kelly D."/>
            <person name="Bird C."/>
            <person name="Palmer S."/>
            <person name="Gehring I."/>
            <person name="Berger A."/>
            <person name="Dooley C.M."/>
            <person name="Ersan-Urun Z."/>
            <person name="Eser C."/>
            <person name="Geiger H."/>
            <person name="Geisler M."/>
            <person name="Karotki L."/>
            <person name="Kirn A."/>
            <person name="Konantz J."/>
            <person name="Konantz M."/>
            <person name="Oberlander M."/>
            <person name="Rudolph-Geiger S."/>
            <person name="Teucke M."/>
            <person name="Lanz C."/>
            <person name="Raddatz G."/>
            <person name="Osoegawa K."/>
            <person name="Zhu B."/>
            <person name="Rapp A."/>
            <person name="Widaa S."/>
            <person name="Langford C."/>
            <person name="Yang F."/>
            <person name="Schuster S.C."/>
            <person name="Carter N.P."/>
            <person name="Harrow J."/>
            <person name="Ning Z."/>
            <person name="Herrero J."/>
            <person name="Searle S.M."/>
            <person name="Enright A."/>
            <person name="Geisler R."/>
            <person name="Plasterk R.H."/>
            <person name="Lee C."/>
            <person name="Westerfield M."/>
            <person name="de Jong P.J."/>
            <person name="Zon L.I."/>
            <person name="Postlethwait J.H."/>
            <person name="Nusslein-Volhard C."/>
            <person name="Hubbard T.J."/>
            <person name="Roest Crollius H."/>
            <person name="Rogers J."/>
            <person name="Stemple D.L."/>
        </authorList>
    </citation>
    <scope>NUCLEOTIDE SEQUENCE [LARGE SCALE GENOMIC DNA]</scope>
    <source>
        <strain>Tuebingen</strain>
    </source>
</reference>
<proteinExistence type="inferred from homology"/>
<organism>
    <name type="scientific">Danio rerio</name>
    <name type="common">Zebrafish</name>
    <name type="synonym">Brachydanio rerio</name>
    <dbReference type="NCBI Taxonomy" id="7955"/>
    <lineage>
        <taxon>Eukaryota</taxon>
        <taxon>Metazoa</taxon>
        <taxon>Chordata</taxon>
        <taxon>Craniata</taxon>
        <taxon>Vertebrata</taxon>
        <taxon>Euteleostomi</taxon>
        <taxon>Actinopterygii</taxon>
        <taxon>Neopterygii</taxon>
        <taxon>Teleostei</taxon>
        <taxon>Ostariophysi</taxon>
        <taxon>Cypriniformes</taxon>
        <taxon>Danionidae</taxon>
        <taxon>Danioninae</taxon>
        <taxon>Danio</taxon>
    </lineage>
</organism>